<sequence>MKDELFKQSPKKQFEFDKSVASVFDDMINRSVPFYRENLELCGNLLAKILPINASICDLGCSSANFLIFLANLRKDFKLFGVDNSASMVEVAKSKAKAYGLDISFFETNLCEFDFFVCDVFVANYTMQFIRPPKRQELLDKIYKNLNSKGILIMSEKILYEDAFLSKNIIELYADYKEKQGYSKFEIAAKREALENVLIPYSQKENLNMLEKAGFKKIESIFKWANFETFIAFKD</sequence>
<name>CMOA_CAMJ8</name>
<dbReference type="EC" id="2.1.3.-" evidence="1"/>
<dbReference type="EMBL" id="CP000814">
    <property type="protein sequence ID" value="ABV52151.1"/>
    <property type="molecule type" value="Genomic_DNA"/>
</dbReference>
<dbReference type="SMR" id="A8FL14"/>
<dbReference type="KEGG" id="cju:C8J_0552"/>
<dbReference type="HOGENOM" id="CLU_078475_0_0_7"/>
<dbReference type="GO" id="GO:0016743">
    <property type="term" value="F:carboxyl- or carbamoyltransferase activity"/>
    <property type="evidence" value="ECO:0007669"/>
    <property type="project" value="UniProtKB-UniRule"/>
</dbReference>
<dbReference type="GO" id="GO:1904047">
    <property type="term" value="F:S-adenosyl-L-methionine binding"/>
    <property type="evidence" value="ECO:0007669"/>
    <property type="project" value="UniProtKB-UniRule"/>
</dbReference>
<dbReference type="GO" id="GO:0002098">
    <property type="term" value="P:tRNA wobble uridine modification"/>
    <property type="evidence" value="ECO:0007669"/>
    <property type="project" value="InterPro"/>
</dbReference>
<dbReference type="CDD" id="cd02440">
    <property type="entry name" value="AdoMet_MTases"/>
    <property type="match status" value="1"/>
</dbReference>
<dbReference type="Gene3D" id="3.40.50.150">
    <property type="entry name" value="Vaccinia Virus protein VP39"/>
    <property type="match status" value="1"/>
</dbReference>
<dbReference type="HAMAP" id="MF_01589">
    <property type="entry name" value="Cx_SAM_synthase"/>
    <property type="match status" value="1"/>
</dbReference>
<dbReference type="InterPro" id="IPR005271">
    <property type="entry name" value="CmoA"/>
</dbReference>
<dbReference type="InterPro" id="IPR041698">
    <property type="entry name" value="Methyltransf_25"/>
</dbReference>
<dbReference type="InterPro" id="IPR029063">
    <property type="entry name" value="SAM-dependent_MTases_sf"/>
</dbReference>
<dbReference type="NCBIfam" id="TIGR00740">
    <property type="entry name" value="carboxy-S-adenosyl-L-methionine synthase CmoA"/>
    <property type="match status" value="1"/>
</dbReference>
<dbReference type="PANTHER" id="PTHR43861:SF2">
    <property type="entry name" value="CARBOXY-S-ADENOSYL-L-METHIONINE SYNTHASE"/>
    <property type="match status" value="1"/>
</dbReference>
<dbReference type="PANTHER" id="PTHR43861">
    <property type="entry name" value="TRANS-ACONITATE 2-METHYLTRANSFERASE-RELATED"/>
    <property type="match status" value="1"/>
</dbReference>
<dbReference type="Pfam" id="PF13649">
    <property type="entry name" value="Methyltransf_25"/>
    <property type="match status" value="1"/>
</dbReference>
<dbReference type="PIRSF" id="PIRSF006325">
    <property type="entry name" value="MeTrfase_bac"/>
    <property type="match status" value="1"/>
</dbReference>
<dbReference type="SUPFAM" id="SSF53335">
    <property type="entry name" value="S-adenosyl-L-methionine-dependent methyltransferases"/>
    <property type="match status" value="1"/>
</dbReference>
<feature type="chain" id="PRO_0000314318" description="Carboxy-S-adenosyl-L-methionine synthase">
    <location>
        <begin position="1"/>
        <end position="235"/>
    </location>
</feature>
<feature type="binding site" evidence="1">
    <location>
        <position position="35"/>
    </location>
    <ligand>
        <name>S-adenosyl-L-methionine</name>
        <dbReference type="ChEBI" id="CHEBI:59789"/>
    </ligand>
</feature>
<feature type="binding site" evidence="1">
    <location>
        <begin position="60"/>
        <end position="62"/>
    </location>
    <ligand>
        <name>S-adenosyl-L-methionine</name>
        <dbReference type="ChEBI" id="CHEBI:59789"/>
    </ligand>
</feature>
<feature type="binding site" evidence="1">
    <location>
        <begin position="83"/>
        <end position="84"/>
    </location>
    <ligand>
        <name>S-adenosyl-L-methionine</name>
        <dbReference type="ChEBI" id="CHEBI:59789"/>
    </ligand>
</feature>
<feature type="binding site" evidence="1">
    <location>
        <position position="124"/>
    </location>
    <ligand>
        <name>S-adenosyl-L-methionine</name>
        <dbReference type="ChEBI" id="CHEBI:59789"/>
    </ligand>
</feature>
<feature type="binding site" evidence="1">
    <location>
        <position position="191"/>
    </location>
    <ligand>
        <name>S-adenosyl-L-methionine</name>
        <dbReference type="ChEBI" id="CHEBI:59789"/>
    </ligand>
</feature>
<gene>
    <name evidence="1" type="primary">cmoA</name>
    <name type="ordered locus">C8J_0552</name>
</gene>
<keyword id="KW-0949">S-adenosyl-L-methionine</keyword>
<keyword id="KW-0808">Transferase</keyword>
<comment type="function">
    <text evidence="1">Catalyzes the conversion of S-adenosyl-L-methionine (SAM) to carboxy-S-adenosyl-L-methionine (Cx-SAM).</text>
</comment>
<comment type="catalytic activity">
    <reaction evidence="1">
        <text>prephenate + S-adenosyl-L-methionine = carboxy-S-adenosyl-L-methionine + 3-phenylpyruvate + H2O</text>
        <dbReference type="Rhea" id="RHEA:51692"/>
        <dbReference type="ChEBI" id="CHEBI:15377"/>
        <dbReference type="ChEBI" id="CHEBI:18005"/>
        <dbReference type="ChEBI" id="CHEBI:29934"/>
        <dbReference type="ChEBI" id="CHEBI:59789"/>
        <dbReference type="ChEBI" id="CHEBI:134278"/>
    </reaction>
</comment>
<comment type="subunit">
    <text evidence="1">Homodimer.</text>
</comment>
<comment type="similarity">
    <text evidence="1">Belongs to the class I-like SAM-binding methyltransferase superfamily. Cx-SAM synthase family.</text>
</comment>
<accession>A8FL14</accession>
<reference key="1">
    <citation type="journal article" date="2007" name="J. Bacteriol.">
        <title>The complete genome sequence of Campylobacter jejuni strain 81116 (NCTC11828).</title>
        <authorList>
            <person name="Pearson B.M."/>
            <person name="Gaskin D.J.H."/>
            <person name="Segers R.P.A.M."/>
            <person name="Wells J.M."/>
            <person name="Nuijten P.J.M."/>
            <person name="van Vliet A.H.M."/>
        </authorList>
    </citation>
    <scope>NUCLEOTIDE SEQUENCE [LARGE SCALE GENOMIC DNA]</scope>
    <source>
        <strain>81116 / NCTC 11828</strain>
    </source>
</reference>
<evidence type="ECO:0000255" key="1">
    <source>
        <dbReference type="HAMAP-Rule" id="MF_01589"/>
    </source>
</evidence>
<organism>
    <name type="scientific">Campylobacter jejuni subsp. jejuni serotype O:6 (strain 81116 / NCTC 11828)</name>
    <dbReference type="NCBI Taxonomy" id="407148"/>
    <lineage>
        <taxon>Bacteria</taxon>
        <taxon>Pseudomonadati</taxon>
        <taxon>Campylobacterota</taxon>
        <taxon>Epsilonproteobacteria</taxon>
        <taxon>Campylobacterales</taxon>
        <taxon>Campylobacteraceae</taxon>
        <taxon>Campylobacter</taxon>
    </lineage>
</organism>
<protein>
    <recommendedName>
        <fullName evidence="1">Carboxy-S-adenosyl-L-methionine synthase</fullName>
        <shortName evidence="1">Cx-SAM synthase</shortName>
        <ecNumber evidence="1">2.1.3.-</ecNumber>
    </recommendedName>
</protein>
<proteinExistence type="inferred from homology"/>